<dbReference type="EC" id="1.7.1.13" evidence="1"/>
<dbReference type="EMBL" id="AY157498">
    <property type="protein sequence ID" value="AAN46170.1"/>
    <property type="molecule type" value="Genomic_DNA"/>
</dbReference>
<dbReference type="EMBL" id="CP000100">
    <property type="protein sequence ID" value="ABB57874.1"/>
    <property type="molecule type" value="Genomic_DNA"/>
</dbReference>
<dbReference type="SMR" id="Q8GJN6"/>
<dbReference type="STRING" id="1140.Synpcc7942_1844"/>
<dbReference type="PaxDb" id="1140-Synpcc7942_1844"/>
<dbReference type="KEGG" id="syf:Synpcc7942_1844"/>
<dbReference type="eggNOG" id="COG0780">
    <property type="taxonomic scope" value="Bacteria"/>
</dbReference>
<dbReference type="HOGENOM" id="CLU_102489_0_1_3"/>
<dbReference type="OrthoDB" id="9795077at2"/>
<dbReference type="BioCyc" id="SYNEL:SYNPCC7942_1844-MONOMER"/>
<dbReference type="UniPathway" id="UPA00392"/>
<dbReference type="Proteomes" id="UP000889800">
    <property type="component" value="Chromosome"/>
</dbReference>
<dbReference type="GO" id="GO:0005737">
    <property type="term" value="C:cytoplasm"/>
    <property type="evidence" value="ECO:0007669"/>
    <property type="project" value="UniProtKB-SubCell"/>
</dbReference>
<dbReference type="GO" id="GO:0033739">
    <property type="term" value="F:preQ1 synthase activity"/>
    <property type="evidence" value="ECO:0007669"/>
    <property type="project" value="UniProtKB-UniRule"/>
</dbReference>
<dbReference type="GO" id="GO:0008616">
    <property type="term" value="P:queuosine biosynthetic process"/>
    <property type="evidence" value="ECO:0007669"/>
    <property type="project" value="UniProtKB-UniRule"/>
</dbReference>
<dbReference type="GO" id="GO:0006400">
    <property type="term" value="P:tRNA modification"/>
    <property type="evidence" value="ECO:0007669"/>
    <property type="project" value="UniProtKB-UniRule"/>
</dbReference>
<dbReference type="Gene3D" id="3.30.1130.10">
    <property type="match status" value="1"/>
</dbReference>
<dbReference type="HAMAP" id="MF_00818">
    <property type="entry name" value="QueF_type1"/>
    <property type="match status" value="1"/>
</dbReference>
<dbReference type="InterPro" id="IPR043133">
    <property type="entry name" value="GTP-CH-I_C/QueF"/>
</dbReference>
<dbReference type="InterPro" id="IPR050084">
    <property type="entry name" value="NADPH_dep_7-cyano-7-deazaG_red"/>
</dbReference>
<dbReference type="InterPro" id="IPR029500">
    <property type="entry name" value="QueF"/>
</dbReference>
<dbReference type="InterPro" id="IPR016856">
    <property type="entry name" value="QueF_type1"/>
</dbReference>
<dbReference type="NCBIfam" id="TIGR03139">
    <property type="entry name" value="QueF-II"/>
    <property type="match status" value="1"/>
</dbReference>
<dbReference type="PANTHER" id="PTHR34354">
    <property type="entry name" value="NADPH-DEPENDENT 7-CYANO-7-DEAZAGUANINE REDUCTASE"/>
    <property type="match status" value="1"/>
</dbReference>
<dbReference type="PANTHER" id="PTHR34354:SF1">
    <property type="entry name" value="NADPH-DEPENDENT 7-CYANO-7-DEAZAGUANINE REDUCTASE"/>
    <property type="match status" value="1"/>
</dbReference>
<dbReference type="Pfam" id="PF14489">
    <property type="entry name" value="QueF"/>
    <property type="match status" value="1"/>
</dbReference>
<dbReference type="SUPFAM" id="SSF55620">
    <property type="entry name" value="Tetrahydrobiopterin biosynthesis enzymes-like"/>
    <property type="match status" value="1"/>
</dbReference>
<accession>Q8GJN6</accession>
<accession>Q31M45</accession>
<comment type="function">
    <text evidence="1">Catalyzes the NADPH-dependent reduction of 7-cyano-7-deazaguanine (preQ0) to 7-aminomethyl-7-deazaguanine (preQ1).</text>
</comment>
<comment type="catalytic activity">
    <reaction evidence="1">
        <text>7-aminomethyl-7-carbaguanine + 2 NADP(+) = 7-cyano-7-deazaguanine + 2 NADPH + 3 H(+)</text>
        <dbReference type="Rhea" id="RHEA:13409"/>
        <dbReference type="ChEBI" id="CHEBI:15378"/>
        <dbReference type="ChEBI" id="CHEBI:45075"/>
        <dbReference type="ChEBI" id="CHEBI:57783"/>
        <dbReference type="ChEBI" id="CHEBI:58349"/>
        <dbReference type="ChEBI" id="CHEBI:58703"/>
        <dbReference type="EC" id="1.7.1.13"/>
    </reaction>
</comment>
<comment type="pathway">
    <text evidence="1">tRNA modification; tRNA-queuosine biosynthesis.</text>
</comment>
<comment type="subcellular location">
    <subcellularLocation>
        <location evidence="1">Cytoplasm</location>
    </subcellularLocation>
</comment>
<comment type="similarity">
    <text evidence="1">Belongs to the GTP cyclohydrolase I family. QueF type 1 subfamily.</text>
</comment>
<sequence>MGREGWSRVLSATGENRERSLQKFMTETLTQLGQMVGLPASPEVAVLETFDNPHPDRQYLVRFVAPEFTSLCPLTGQPDFAHLVLDYVPDQRLVESKSLKLFLGSFRNHGAFHENCTLTIAKRLEEAMNPTWLRLGGYWYPRGGLPIDVFYQSGEPPAGVWVPEQGVAPYRGRG</sequence>
<evidence type="ECO:0000255" key="1">
    <source>
        <dbReference type="HAMAP-Rule" id="MF_00818"/>
    </source>
</evidence>
<keyword id="KW-0963">Cytoplasm</keyword>
<keyword id="KW-0521">NADP</keyword>
<keyword id="KW-0560">Oxidoreductase</keyword>
<keyword id="KW-0671">Queuosine biosynthesis</keyword>
<keyword id="KW-1185">Reference proteome</keyword>
<proteinExistence type="inferred from homology"/>
<feature type="chain" id="PRO_0000163011" description="NADPH-dependent 7-cyano-7-deazaguanine reductase">
    <location>
        <begin position="1"/>
        <end position="174"/>
    </location>
</feature>
<feature type="active site" description="Thioimide intermediate" evidence="1">
    <location>
        <position position="72"/>
    </location>
</feature>
<feature type="active site" description="Proton donor" evidence="1">
    <location>
        <position position="79"/>
    </location>
</feature>
<feature type="binding site" evidence="1">
    <location>
        <begin position="94"/>
        <end position="96"/>
    </location>
    <ligand>
        <name>substrate</name>
    </ligand>
</feature>
<feature type="binding site" evidence="1">
    <location>
        <begin position="113"/>
        <end position="114"/>
    </location>
    <ligand>
        <name>substrate</name>
    </ligand>
</feature>
<reference key="1">
    <citation type="submission" date="2002-10" db="EMBL/GenBank/DDBJ databases">
        <title>Synechococcus elongatus PCC7942 cosmid 4G8.</title>
        <authorList>
            <person name="Holtman C.K."/>
            <person name="Sandoval P."/>
            <person name="Chen Y."/>
            <person name="Socias T."/>
            <person name="McMurtry S."/>
            <person name="Gonzalez A."/>
            <person name="Salinas I."/>
            <person name="Golden S.S."/>
            <person name="Youderian P."/>
        </authorList>
    </citation>
    <scope>NUCLEOTIDE SEQUENCE [LARGE SCALE GENOMIC DNA]</scope>
</reference>
<reference key="2">
    <citation type="submission" date="2005-08" db="EMBL/GenBank/DDBJ databases">
        <title>Complete sequence of chromosome 1 of Synechococcus elongatus PCC 7942.</title>
        <authorList>
            <consortium name="US DOE Joint Genome Institute"/>
            <person name="Copeland A."/>
            <person name="Lucas S."/>
            <person name="Lapidus A."/>
            <person name="Barry K."/>
            <person name="Detter J.C."/>
            <person name="Glavina T."/>
            <person name="Hammon N."/>
            <person name="Israni S."/>
            <person name="Pitluck S."/>
            <person name="Schmutz J."/>
            <person name="Larimer F."/>
            <person name="Land M."/>
            <person name="Kyrpides N."/>
            <person name="Lykidis A."/>
            <person name="Golden S."/>
            <person name="Richardson P."/>
        </authorList>
    </citation>
    <scope>NUCLEOTIDE SEQUENCE [LARGE SCALE GENOMIC DNA]</scope>
    <source>
        <strain>ATCC 33912 / PCC 7942 / FACHB-805</strain>
    </source>
</reference>
<name>QUEF_SYNE7</name>
<gene>
    <name evidence="1" type="primary">queF</name>
    <name type="ordered locus">Synpcc7942_1844</name>
</gene>
<organism>
    <name type="scientific">Synechococcus elongatus (strain ATCC 33912 / PCC 7942 / FACHB-805)</name>
    <name type="common">Anacystis nidulans R2</name>
    <dbReference type="NCBI Taxonomy" id="1140"/>
    <lineage>
        <taxon>Bacteria</taxon>
        <taxon>Bacillati</taxon>
        <taxon>Cyanobacteriota</taxon>
        <taxon>Cyanophyceae</taxon>
        <taxon>Synechococcales</taxon>
        <taxon>Synechococcaceae</taxon>
        <taxon>Synechococcus</taxon>
    </lineage>
</organism>
<protein>
    <recommendedName>
        <fullName evidence="1">NADPH-dependent 7-cyano-7-deazaguanine reductase</fullName>
        <ecNumber evidence="1">1.7.1.13</ecNumber>
    </recommendedName>
    <alternativeName>
        <fullName evidence="1">7-cyano-7-carbaguanine reductase</fullName>
    </alternativeName>
    <alternativeName>
        <fullName evidence="1">NADPH-dependent nitrile oxidoreductase</fullName>
    </alternativeName>
    <alternativeName>
        <fullName evidence="1">PreQ(0) reductase</fullName>
    </alternativeName>
</protein>